<comment type="similarity">
    <text evidence="1">Belongs to the UPF0284 family.</text>
</comment>
<organism>
    <name type="scientific">Saccharolobus islandicus (strain Y.N.15.51 / Yellowstone #2)</name>
    <name type="common">Sulfolobus islandicus</name>
    <dbReference type="NCBI Taxonomy" id="419942"/>
    <lineage>
        <taxon>Archaea</taxon>
        <taxon>Thermoproteota</taxon>
        <taxon>Thermoprotei</taxon>
        <taxon>Sulfolobales</taxon>
        <taxon>Sulfolobaceae</taxon>
        <taxon>Saccharolobus</taxon>
    </lineage>
</organism>
<name>Y030_SACI1</name>
<proteinExistence type="inferred from homology"/>
<sequence length="347" mass="37130">MIKEYYGAETFILNKDFAYILVIGTTDVSLIPGLTIAGATPELTHFTPAADAEYVLLGKCKSINTIPVSPTGIPTPALLTRASLSFINPLKIVVNAGSRILPKIPYIDLQGEPGKDIRKQALSMEKVNNIMENSIKLGEELSNEYELIMIGESIPAGTTTAMATLLALGYDAMDKVSSASPDNPKELKRKVVEEALRNLPTDSLQRLAKVSDPVLLGVAGTSLGFKGKILLAGGTQMTAAAAIINEFDKNKLKDITIGTTKWIVEDKFADMLSLAKQVGVKVLASMLDLSISAYEGIRAYEKGYVKEGVGAGGSAIMALVRGVSNNTLVRKIDELYSELVGSNNLHI</sequence>
<accession>C3NJ62</accession>
<feature type="chain" id="PRO_1000213533" description="UPF0284 protein YN1551_0030">
    <location>
        <begin position="1"/>
        <end position="347"/>
    </location>
</feature>
<dbReference type="EMBL" id="CP001404">
    <property type="protein sequence ID" value="ACP47229.1"/>
    <property type="molecule type" value="Genomic_DNA"/>
</dbReference>
<dbReference type="RefSeq" id="WP_012716914.1">
    <property type="nucleotide sequence ID" value="NC_012623.1"/>
</dbReference>
<dbReference type="SMR" id="C3NJ62"/>
<dbReference type="GeneID" id="7808930"/>
<dbReference type="KEGG" id="sin:YN1551_0030"/>
<dbReference type="HOGENOM" id="CLU_053134_0_0_2"/>
<dbReference type="Proteomes" id="UP000006818">
    <property type="component" value="Chromosome"/>
</dbReference>
<dbReference type="GO" id="GO:0008939">
    <property type="term" value="F:nicotinate-nucleotide-dimethylbenzimidazole phosphoribosyltransferase activity"/>
    <property type="evidence" value="ECO:0007669"/>
    <property type="project" value="InterPro"/>
</dbReference>
<dbReference type="CDD" id="cd02439">
    <property type="entry name" value="DMB-PRT_CobT"/>
    <property type="match status" value="1"/>
</dbReference>
<dbReference type="Gene3D" id="3.40.50.10210">
    <property type="match status" value="1"/>
</dbReference>
<dbReference type="HAMAP" id="MF_01086">
    <property type="entry name" value="UPF0284"/>
    <property type="match status" value="1"/>
</dbReference>
<dbReference type="InterPro" id="IPR003200">
    <property type="entry name" value="Nict_dMeBzImd_PRibTrfase"/>
</dbReference>
<dbReference type="InterPro" id="IPR002805">
    <property type="entry name" value="Nict_dMeBzImd_PRibTrfase_arc"/>
</dbReference>
<dbReference type="InterPro" id="IPR036087">
    <property type="entry name" value="Nict_dMeBzImd_PRibTrfase_sf"/>
</dbReference>
<dbReference type="NCBIfam" id="TIGR00303">
    <property type="entry name" value="nicotinate mononucleotide-dependent phosphoribosyltransferase CobT"/>
    <property type="match status" value="1"/>
</dbReference>
<dbReference type="NCBIfam" id="NF003368">
    <property type="entry name" value="PRK04447.1-1"/>
    <property type="match status" value="1"/>
</dbReference>
<dbReference type="NCBIfam" id="NF003370">
    <property type="entry name" value="PRK04447.1-3"/>
    <property type="match status" value="1"/>
</dbReference>
<dbReference type="NCBIfam" id="NF003372">
    <property type="entry name" value="PRK04447.1-5"/>
    <property type="match status" value="1"/>
</dbReference>
<dbReference type="PANTHER" id="PTHR38811">
    <property type="match status" value="1"/>
</dbReference>
<dbReference type="PANTHER" id="PTHR38811:SF1">
    <property type="entry name" value="UPF0284 PROTEIN SLL1500"/>
    <property type="match status" value="1"/>
</dbReference>
<dbReference type="Pfam" id="PF02277">
    <property type="entry name" value="DBI_PRT"/>
    <property type="match status" value="1"/>
</dbReference>
<dbReference type="SUPFAM" id="SSF52733">
    <property type="entry name" value="Nicotinate mononucleotide:5,6-dimethylbenzimidazole phosphoribosyltransferase (CobT)"/>
    <property type="match status" value="1"/>
</dbReference>
<protein>
    <recommendedName>
        <fullName evidence="1">UPF0284 protein YN1551_0030</fullName>
    </recommendedName>
</protein>
<evidence type="ECO:0000255" key="1">
    <source>
        <dbReference type="HAMAP-Rule" id="MF_01086"/>
    </source>
</evidence>
<gene>
    <name type="ordered locus">YN1551_0030</name>
</gene>
<reference key="1">
    <citation type="journal article" date="2009" name="Proc. Natl. Acad. Sci. U.S.A.">
        <title>Biogeography of the Sulfolobus islandicus pan-genome.</title>
        <authorList>
            <person name="Reno M.L."/>
            <person name="Held N.L."/>
            <person name="Fields C.J."/>
            <person name="Burke P.V."/>
            <person name="Whitaker R.J."/>
        </authorList>
    </citation>
    <scope>NUCLEOTIDE SEQUENCE [LARGE SCALE GENOMIC DNA]</scope>
    <source>
        <strain>Y.N.15.51 / Yellowstone #2</strain>
    </source>
</reference>